<feature type="propeptide" id="PRO_0000450590" evidence="6 7">
    <location>
        <begin position="1"/>
        <end position="25"/>
    </location>
</feature>
<feature type="peptide" id="PRO_0000450591" description="Astexin-2" evidence="6 7">
    <location>
        <begin position="26"/>
        <end position="49"/>
    </location>
</feature>
<feature type="cross-link" description="Isoaspartyl glycine isopeptide (Gly-Asp)" evidence="3">
    <location>
        <begin position="26"/>
        <end position="34"/>
    </location>
</feature>
<feature type="mutagenesis site" description="Decrease in cleavage by the isopeptidase AtxE2." evidence="3">
    <original>V</original>
    <variation>A</variation>
    <location>
        <position position="36"/>
    </location>
</feature>
<feature type="mutagenesis site" description="Decrease in cleavage by the isopeptidase AtxE2." evidence="3">
    <original>G</original>
    <variation>A</variation>
    <location>
        <position position="38"/>
    </location>
</feature>
<feature type="mutagenesis site" description="Decrease in cleavage by the isopeptidase AtxE2." evidence="3">
    <original>Q</original>
    <variation>A</variation>
    <location>
        <position position="39"/>
    </location>
</feature>
<feature type="strand" evidence="11">
    <location>
        <begin position="28"/>
        <end position="32"/>
    </location>
</feature>
<feature type="strand" evidence="11">
    <location>
        <begin position="35"/>
        <end position="40"/>
    </location>
</feature>
<keyword id="KW-0002">3D-structure</keyword>
<keyword id="KW-0044">Antibiotic</keyword>
<keyword id="KW-0929">Antimicrobial</keyword>
<keyword id="KW-0963">Cytoplasm</keyword>
<keyword id="KW-1017">Isopeptide bond</keyword>
<keyword id="KW-1185">Reference proteome</keyword>
<keyword id="KW-0964">Secreted</keyword>
<organism>
    <name type="scientific">Asticcacaulis excentricus (strain ATCC 15261 / DSM 4724 / KCTC 12464 / NCIMB 9791 / VKM B-1370 / CB 48)</name>
    <dbReference type="NCBI Taxonomy" id="573065"/>
    <lineage>
        <taxon>Bacteria</taxon>
        <taxon>Pseudomonadati</taxon>
        <taxon>Pseudomonadota</taxon>
        <taxon>Alphaproteobacteria</taxon>
        <taxon>Caulobacterales</taxon>
        <taxon>Caulobacteraceae</taxon>
        <taxon>Asticcacaulis</taxon>
    </lineage>
</organism>
<evidence type="ECO:0000250" key="1">
    <source>
        <dbReference type="UniProtKB" id="E8RMD3"/>
    </source>
</evidence>
<evidence type="ECO:0000269" key="2">
    <source>
    </source>
</evidence>
<evidence type="ECO:0000269" key="3">
    <source>
    </source>
</evidence>
<evidence type="ECO:0000303" key="4">
    <source>
    </source>
</evidence>
<evidence type="ECO:0000303" key="5">
    <source>
    </source>
</evidence>
<evidence type="ECO:0000305" key="6">
    <source>
    </source>
</evidence>
<evidence type="ECO:0000305" key="7">
    <source>
    </source>
</evidence>
<evidence type="ECO:0000312" key="8">
    <source>
        <dbReference type="EMBL" id="ADU14099.1"/>
    </source>
</evidence>
<evidence type="ECO:0000312" key="9">
    <source>
        <dbReference type="Proteomes" id="UP000001492"/>
    </source>
</evidence>
<evidence type="ECO:0007744" key="10">
    <source>
        <dbReference type="PDB" id="2N6U"/>
    </source>
</evidence>
<evidence type="ECO:0007829" key="11">
    <source>
        <dbReference type="PDB" id="2N6U"/>
    </source>
</evidence>
<name>ASTX2_ASTEC</name>
<dbReference type="EMBL" id="CP002396">
    <property type="protein sequence ID" value="ADU14099.1"/>
    <property type="molecule type" value="Genomic_DNA"/>
</dbReference>
<dbReference type="PDB" id="2N6U">
    <property type="method" value="NMR"/>
    <property type="chains" value="A=26-45"/>
</dbReference>
<dbReference type="PDBsum" id="2N6U"/>
<dbReference type="BMRB" id="E8RUP9"/>
<dbReference type="SMR" id="E8RUP9"/>
<dbReference type="STRING" id="573065.Astex_2448"/>
<dbReference type="KEGG" id="aex:Astex_2448"/>
<dbReference type="HOGENOM" id="CLU_3131826_0_0_5"/>
<dbReference type="EvolutionaryTrace" id="E8RUP9"/>
<dbReference type="Proteomes" id="UP000001492">
    <property type="component" value="Chromosome 2"/>
</dbReference>
<dbReference type="GO" id="GO:0005737">
    <property type="term" value="C:cytoplasm"/>
    <property type="evidence" value="ECO:0007669"/>
    <property type="project" value="UniProtKB-SubCell"/>
</dbReference>
<dbReference type="GO" id="GO:0005576">
    <property type="term" value="C:extracellular region"/>
    <property type="evidence" value="ECO:0007669"/>
    <property type="project" value="UniProtKB-SubCell"/>
</dbReference>
<dbReference type="GO" id="GO:0042742">
    <property type="term" value="P:defense response to bacterium"/>
    <property type="evidence" value="ECO:0007669"/>
    <property type="project" value="UniProtKB-KW"/>
</dbReference>
<dbReference type="InterPro" id="IPR049805">
    <property type="entry name" value="Lasso_benenodin"/>
</dbReference>
<dbReference type="Pfam" id="PF24178">
    <property type="entry name" value="Subterisin"/>
    <property type="match status" value="1"/>
</dbReference>
<comment type="function">
    <text evidence="1">Shows weak antimicrobial activity against its phylogenetic relative Caulobacter crescentus. Does not show activity against other bacteria tested (E.coli, Vibrio sp, Burkhoderia thailandensis, and Salmonella newport).</text>
</comment>
<comment type="biophysicochemical properties">
    <temperatureDependence>
        <text evidence="2">Unthreads upon heat treatment.</text>
    </temperatureDependence>
</comment>
<comment type="subcellular location">
    <subcellularLocation>
        <location evidence="6">Cytoplasm</location>
    </subcellularLocation>
    <subcellularLocation>
        <location evidence="6">Secreted</location>
    </subcellularLocation>
    <text evidence="6 7">Intracellular, when expressed in E.coli. The gene cluster lacks the ABC transporter usually responsible for export of the mature peptide (Probable). May be secreted in vivo (Probable).</text>
</comment>
<comment type="domain">
    <text evidence="3 6 7">Is composed of a ring composed by 9 residues, a 5 residue-loop (SVSGQ) and a C-terminal tail (PubMed:26534965). The peptide is threaded when the C-terminal tail is inserted throught the isopeptide-bonded ring. The loop region serves as a recognition element for the isopeptidase AtxE2 (Probable).</text>
</comment>
<comment type="PTM">
    <text evidence="2">This lasso peptide is hydrolyzed to a linear form by the isopeptidase AtxE2, in vitro. The isopeptidase AtxE2 only recognizes the threaded form (but not the unthreaded form).</text>
</comment>
<sequence length="49" mass="5288">MTKRTTIAARRVGLIDLGKATRQTKGLTQIQALDSVSGQFRDQLGLSAD</sequence>
<reference evidence="9" key="1">
    <citation type="submission" date="2010-12" db="EMBL/GenBank/DDBJ databases">
        <title>Complete sequence of chromosome 2 of Asticcacaulis excentricus CB 48.</title>
        <authorList>
            <consortium name="US DOE Joint Genome Institute"/>
            <person name="Lucas S."/>
            <person name="Copeland A."/>
            <person name="Lapidus A."/>
            <person name="Cheng J.-F."/>
            <person name="Bruce D."/>
            <person name="Goodwin L."/>
            <person name="Pitluck S."/>
            <person name="Teshima H."/>
            <person name="Davenport K."/>
            <person name="Detter J.C."/>
            <person name="Han C."/>
            <person name="Tapia R."/>
            <person name="Land M."/>
            <person name="Hauser L."/>
            <person name="Jeffries C."/>
            <person name="Kyrpides N."/>
            <person name="Ivanova N."/>
            <person name="Ovchinnikova G."/>
            <person name="Brun Y.V."/>
            <person name="Woyke T."/>
        </authorList>
    </citation>
    <scope>NUCLEOTIDE SEQUENCE [LARGE SCALE GENOMIC DNA]</scope>
    <source>
        <strain>ATCC 15261 / DSM 4724 / KCTC 12464 / NCIMB 9791 / VKM B-1370 / CB 48</strain>
    </source>
</reference>
<reference key="2">
    <citation type="journal article" date="2013" name="J. Am. Chem. Soc.">
        <title>Discovery and characterization of an isopeptidase that linearizes lasso peptides.</title>
        <authorList>
            <person name="Maksimov M.O."/>
            <person name="Link A.J."/>
        </authorList>
    </citation>
    <scope>EXPRESSION IN E.COLI</scope>
    <scope>CROSS-LINK</scope>
    <scope>BIOPHYSICOCHEMICAL PROPERTIES</scope>
    <scope>SUBCELLULAR LOCATION</scope>
</reference>
<reference evidence="10" key="3">
    <citation type="journal article" date="2015" name="J. Biol. Chem.">
        <title>Elucidating the specificity determinants of the AtxE2 lasso peptide isopeptidase.</title>
        <authorList>
            <person name="Maksimov M.O."/>
            <person name="Koos J.D."/>
            <person name="Zong C."/>
            <person name="Lisko B."/>
            <person name="Link A.J."/>
        </authorList>
    </citation>
    <scope>EXPRESSION IN E.COLI</scope>
    <scope>STRUCTURE BY NMR OF THE VARIANT ASTEXIN-2 DELTA-C4</scope>
    <scope>MUTAGENESIS OF VAL-36; GLY-38 AND GLN-39</scope>
</reference>
<accession>E8RUP9</accession>
<proteinExistence type="evidence at protein level"/>
<protein>
    <recommendedName>
        <fullName evidence="4 5">Astexin-2</fullName>
    </recommendedName>
    <alternativeName>
        <fullName evidence="4 5">Class II lasso peptide</fullName>
    </alternativeName>
    <alternativeName>
        <fullName evidence="4">Ribosomally synthesized and post-translationally modified peptide</fullName>
        <shortName evidence="4">RiPP</shortName>
    </alternativeName>
</protein>
<gene>
    <name evidence="4" type="primary">AtxA2</name>
    <name evidence="8" type="ordered locus">Astex_2448</name>
</gene>